<protein>
    <recommendedName>
        <fullName>DNA-directed RNA polymerases IV and V subunit 5B</fullName>
    </recommendedName>
    <alternativeName>
        <fullName>DNA-directed RNA polymerase 23kD subunit</fullName>
    </alternativeName>
</protein>
<accession>Q9ZVB9</accession>
<name>RPD5B_ARATH</name>
<sequence length="218" mass="24901">MEGKGKEIVVGHSISKSSVECHKYYLARRTTMEMLRDRGYDVSDEDINLSLQQFRALYGEHPDVDLLRISAKHRFDSSKKISVVFCGTGIVKVNAMRVIAADVLSRENITGLILVLQSHITNQALKAVELFSFKVELFEITDLLVNVSKHVLRPKHQVLNDKEKESLLKKFSIEEKQLPRLSSKDPIVRYYGLETGQVMKVTYKDELSESHVTYRCVS</sequence>
<dbReference type="EMBL" id="AC005662">
    <property type="protein sequence ID" value="AAC78539.1"/>
    <property type="molecule type" value="Genomic_DNA"/>
</dbReference>
<dbReference type="EMBL" id="CP002685">
    <property type="protein sequence ID" value="AEC09961.1"/>
    <property type="molecule type" value="Genomic_DNA"/>
</dbReference>
<dbReference type="EMBL" id="AY078926">
    <property type="protein sequence ID" value="AAL84932.1"/>
    <property type="molecule type" value="mRNA"/>
</dbReference>
<dbReference type="PIR" id="E84840">
    <property type="entry name" value="E84840"/>
</dbReference>
<dbReference type="SMR" id="Q9ZVB9"/>
<dbReference type="BioGRID" id="4069">
    <property type="interactions" value="1"/>
</dbReference>
<dbReference type="FunCoup" id="Q9ZVB9">
    <property type="interactions" value="4"/>
</dbReference>
<dbReference type="STRING" id="3702.Q9ZVB9"/>
<dbReference type="PaxDb" id="3702-AT2G41340.1"/>
<dbReference type="ProteomicsDB" id="227957"/>
<dbReference type="EnsemblPlants" id="AT2G41340.1">
    <property type="protein sequence ID" value="AT2G41340.1"/>
    <property type="gene ID" value="AT2G41340"/>
</dbReference>
<dbReference type="GeneID" id="818732"/>
<dbReference type="Gramene" id="AT2G41340.1">
    <property type="protein sequence ID" value="AT2G41340.1"/>
    <property type="gene ID" value="AT2G41340"/>
</dbReference>
<dbReference type="KEGG" id="ath:AT2G41340"/>
<dbReference type="Araport" id="AT2G41340"/>
<dbReference type="TAIR" id="AT2G41340">
    <property type="gene designation" value="RPB5D"/>
</dbReference>
<dbReference type="eggNOG" id="KOG3218">
    <property type="taxonomic scope" value="Eukaryota"/>
</dbReference>
<dbReference type="HOGENOM" id="CLU_058320_0_0_1"/>
<dbReference type="InParanoid" id="Q9ZVB9"/>
<dbReference type="OMA" id="DPIVRYY"/>
<dbReference type="OrthoDB" id="248779at2759"/>
<dbReference type="PhylomeDB" id="Q9ZVB9"/>
<dbReference type="PRO" id="PR:Q9ZVB9"/>
<dbReference type="Proteomes" id="UP000006548">
    <property type="component" value="Chromosome 2"/>
</dbReference>
<dbReference type="ExpressionAtlas" id="Q9ZVB9">
    <property type="expression patterns" value="baseline and differential"/>
</dbReference>
<dbReference type="GO" id="GO:0000418">
    <property type="term" value="C:RNA polymerase IV complex"/>
    <property type="evidence" value="ECO:0000314"/>
    <property type="project" value="UniProtKB"/>
</dbReference>
<dbReference type="GO" id="GO:0000419">
    <property type="term" value="C:RNA polymerase V complex"/>
    <property type="evidence" value="ECO:0000314"/>
    <property type="project" value="UniProtKB"/>
</dbReference>
<dbReference type="GO" id="GO:0003677">
    <property type="term" value="F:DNA binding"/>
    <property type="evidence" value="ECO:0007669"/>
    <property type="project" value="InterPro"/>
</dbReference>
<dbReference type="GO" id="GO:0003899">
    <property type="term" value="F:DNA-directed RNA polymerase activity"/>
    <property type="evidence" value="ECO:0007669"/>
    <property type="project" value="InterPro"/>
</dbReference>
<dbReference type="GO" id="GO:0006351">
    <property type="term" value="P:DNA-templated transcription"/>
    <property type="evidence" value="ECO:0007669"/>
    <property type="project" value="InterPro"/>
</dbReference>
<dbReference type="FunFam" id="3.40.1340.10:FF:000001">
    <property type="entry name" value="DNA-directed RNA polymerases I, II, and III subunit RPABC1"/>
    <property type="match status" value="1"/>
</dbReference>
<dbReference type="FunFam" id="3.90.940.20:FF:000001">
    <property type="entry name" value="DNA-directed RNA polymerases I, II, and III subunit RPABC1"/>
    <property type="match status" value="1"/>
</dbReference>
<dbReference type="Gene3D" id="3.40.1340.10">
    <property type="entry name" value="RNA polymerase, Rpb5, N-terminal domain"/>
    <property type="match status" value="1"/>
</dbReference>
<dbReference type="Gene3D" id="3.90.940.20">
    <property type="entry name" value="RPB5-like RNA polymerase subunit"/>
    <property type="match status" value="1"/>
</dbReference>
<dbReference type="InterPro" id="IPR014381">
    <property type="entry name" value="Arch_Rpo5/euc_Rpb5"/>
</dbReference>
<dbReference type="InterPro" id="IPR005571">
    <property type="entry name" value="RNA_pol_Rpb5_N"/>
</dbReference>
<dbReference type="InterPro" id="IPR036710">
    <property type="entry name" value="RNA_pol_Rpb5_N_sf"/>
</dbReference>
<dbReference type="InterPro" id="IPR000783">
    <property type="entry name" value="RNA_pol_subH/Rpb5_C"/>
</dbReference>
<dbReference type="InterPro" id="IPR035913">
    <property type="entry name" value="RPB5-like_sf"/>
</dbReference>
<dbReference type="PANTHER" id="PTHR10535">
    <property type="entry name" value="DNA-DIRECTED RNA POLYMERASES I, II, AND III SUBUNIT RPABC1"/>
    <property type="match status" value="1"/>
</dbReference>
<dbReference type="PANTHER" id="PTHR10535:SF10">
    <property type="entry name" value="DNA-DIRECTED RNA POLYMERASES IV AND V SUBUNIT 5B"/>
    <property type="match status" value="1"/>
</dbReference>
<dbReference type="Pfam" id="PF01191">
    <property type="entry name" value="RNA_pol_Rpb5_C"/>
    <property type="match status" value="1"/>
</dbReference>
<dbReference type="Pfam" id="PF03871">
    <property type="entry name" value="RNA_pol_Rpb5_N"/>
    <property type="match status" value="1"/>
</dbReference>
<dbReference type="PIRSF" id="PIRSF000747">
    <property type="entry name" value="RPB5"/>
    <property type="match status" value="1"/>
</dbReference>
<dbReference type="SUPFAM" id="SSF53036">
    <property type="entry name" value="Eukaryotic RPB5 N-terminal domain"/>
    <property type="match status" value="1"/>
</dbReference>
<dbReference type="SUPFAM" id="SSF55287">
    <property type="entry name" value="RPB5-like RNA polymerase subunit"/>
    <property type="match status" value="1"/>
</dbReference>
<organism>
    <name type="scientific">Arabidopsis thaliana</name>
    <name type="common">Mouse-ear cress</name>
    <dbReference type="NCBI Taxonomy" id="3702"/>
    <lineage>
        <taxon>Eukaryota</taxon>
        <taxon>Viridiplantae</taxon>
        <taxon>Streptophyta</taxon>
        <taxon>Embryophyta</taxon>
        <taxon>Tracheophyta</taxon>
        <taxon>Spermatophyta</taxon>
        <taxon>Magnoliopsida</taxon>
        <taxon>eudicotyledons</taxon>
        <taxon>Gunneridae</taxon>
        <taxon>Pentapetalae</taxon>
        <taxon>rosids</taxon>
        <taxon>malvids</taxon>
        <taxon>Brassicales</taxon>
        <taxon>Brassicaceae</taxon>
        <taxon>Camelineae</taxon>
        <taxon>Arabidopsis</taxon>
    </lineage>
</organism>
<keyword id="KW-0240">DNA-directed RNA polymerase</keyword>
<keyword id="KW-0539">Nucleus</keyword>
<keyword id="KW-1185">Reference proteome</keyword>
<keyword id="KW-0804">Transcription</keyword>
<comment type="function">
    <text>DNA-dependent RNA polymerase catalyzes the transcription of DNA into RNA using the four ribonucleoside triphosphates as substrates. Component of RNA polymerases IV and V which mediate short-interfering RNAs (siRNA) accumulation and subsequent RNA-directed DNA methylation-dependent (RdDM) transcriptional gene silencing (TGS) of endogenous repeated sequences, including transposable elements.</text>
</comment>
<comment type="subunit">
    <text evidence="3">Component of the RNA polymerase IV and V complexes. Interacts with NRPD1.</text>
</comment>
<comment type="subcellular location">
    <subcellularLocation>
        <location evidence="1">Nucleus</location>
    </subcellularLocation>
</comment>
<comment type="tissue specificity">
    <text evidence="2">Expressed inleaves, flower buds, flowers and siliques.</text>
</comment>
<comment type="similarity">
    <text evidence="4">Belongs to the archaeal Rpo5/eukaryotic RPB5 RNA polymerase subunit family.</text>
</comment>
<proteinExistence type="evidence at protein level"/>
<gene>
    <name type="primary">NRPD5B</name>
    <name type="synonym">NRPE5B</name>
    <name type="synonym">RPB5B</name>
    <name type="ordered locus">At2g41340</name>
    <name type="ORF">F13H10.11</name>
</gene>
<reference key="1">
    <citation type="journal article" date="1999" name="Nature">
        <title>Sequence and analysis of chromosome 2 of the plant Arabidopsis thaliana.</title>
        <authorList>
            <person name="Lin X."/>
            <person name="Kaul S."/>
            <person name="Rounsley S.D."/>
            <person name="Shea T.P."/>
            <person name="Benito M.-I."/>
            <person name="Town C.D."/>
            <person name="Fujii C.Y."/>
            <person name="Mason T.M."/>
            <person name="Bowman C.L."/>
            <person name="Barnstead M.E."/>
            <person name="Feldblyum T.V."/>
            <person name="Buell C.R."/>
            <person name="Ketchum K.A."/>
            <person name="Lee J.J."/>
            <person name="Ronning C.M."/>
            <person name="Koo H.L."/>
            <person name="Moffat K.S."/>
            <person name="Cronin L.A."/>
            <person name="Shen M."/>
            <person name="Pai G."/>
            <person name="Van Aken S."/>
            <person name="Umayam L."/>
            <person name="Tallon L.J."/>
            <person name="Gill J.E."/>
            <person name="Adams M.D."/>
            <person name="Carrera A.J."/>
            <person name="Creasy T.H."/>
            <person name="Goodman H.M."/>
            <person name="Somerville C.R."/>
            <person name="Copenhaver G.P."/>
            <person name="Preuss D."/>
            <person name="Nierman W.C."/>
            <person name="White O."/>
            <person name="Eisen J.A."/>
            <person name="Salzberg S.L."/>
            <person name="Fraser C.M."/>
            <person name="Venter J.C."/>
        </authorList>
    </citation>
    <scope>NUCLEOTIDE SEQUENCE [LARGE SCALE GENOMIC DNA]</scope>
    <source>
        <strain>cv. Columbia</strain>
    </source>
</reference>
<reference key="2">
    <citation type="journal article" date="2017" name="Plant J.">
        <title>Araport11: a complete reannotation of the Arabidopsis thaliana reference genome.</title>
        <authorList>
            <person name="Cheng C.Y."/>
            <person name="Krishnakumar V."/>
            <person name="Chan A.P."/>
            <person name="Thibaud-Nissen F."/>
            <person name="Schobel S."/>
            <person name="Town C.D."/>
        </authorList>
    </citation>
    <scope>GENOME REANNOTATION</scope>
    <source>
        <strain>cv. Columbia</strain>
    </source>
</reference>
<reference key="3">
    <citation type="journal article" date="2003" name="Science">
        <title>Empirical analysis of transcriptional activity in the Arabidopsis genome.</title>
        <authorList>
            <person name="Yamada K."/>
            <person name="Lim J."/>
            <person name="Dale J.M."/>
            <person name="Chen H."/>
            <person name="Shinn P."/>
            <person name="Palm C.J."/>
            <person name="Southwick A.M."/>
            <person name="Wu H.C."/>
            <person name="Kim C.J."/>
            <person name="Nguyen M."/>
            <person name="Pham P.K."/>
            <person name="Cheuk R.F."/>
            <person name="Karlin-Newmann G."/>
            <person name="Liu S.X."/>
            <person name="Lam B."/>
            <person name="Sakano H."/>
            <person name="Wu T."/>
            <person name="Yu G."/>
            <person name="Miranda M."/>
            <person name="Quach H.L."/>
            <person name="Tripp M."/>
            <person name="Chang C.H."/>
            <person name="Lee J.M."/>
            <person name="Toriumi M.J."/>
            <person name="Chan M.M."/>
            <person name="Tang C.C."/>
            <person name="Onodera C.S."/>
            <person name="Deng J.M."/>
            <person name="Akiyama K."/>
            <person name="Ansari Y."/>
            <person name="Arakawa T."/>
            <person name="Banh J."/>
            <person name="Banno F."/>
            <person name="Bowser L."/>
            <person name="Brooks S.Y."/>
            <person name="Carninci P."/>
            <person name="Chao Q."/>
            <person name="Choy N."/>
            <person name="Enju A."/>
            <person name="Goldsmith A.D."/>
            <person name="Gurjal M."/>
            <person name="Hansen N.F."/>
            <person name="Hayashizaki Y."/>
            <person name="Johnson-Hopson C."/>
            <person name="Hsuan V.W."/>
            <person name="Iida K."/>
            <person name="Karnes M."/>
            <person name="Khan S."/>
            <person name="Koesema E."/>
            <person name="Ishida J."/>
            <person name="Jiang P.X."/>
            <person name="Jones T."/>
            <person name="Kawai J."/>
            <person name="Kamiya A."/>
            <person name="Meyers C."/>
            <person name="Nakajima M."/>
            <person name="Narusaka M."/>
            <person name="Seki M."/>
            <person name="Sakurai T."/>
            <person name="Satou M."/>
            <person name="Tamse R."/>
            <person name="Vaysberg M."/>
            <person name="Wallender E.K."/>
            <person name="Wong C."/>
            <person name="Yamamura Y."/>
            <person name="Yuan S."/>
            <person name="Shinozaki K."/>
            <person name="Davis R.W."/>
            <person name="Theologis A."/>
            <person name="Ecker J.R."/>
        </authorList>
    </citation>
    <scope>NUCLEOTIDE SEQUENCE [LARGE SCALE MRNA]</scope>
    <source>
        <strain>cv. Columbia</strain>
    </source>
</reference>
<reference key="4">
    <citation type="journal article" date="2009" name="Proc. Natl. Acad. Sci. U.S.A.">
        <title>PolV(PolIVb) function in RNA-directed DNA methylation requires the conserved active site and an additional plant-specific subunit.</title>
        <authorList>
            <person name="Lahmy S."/>
            <person name="Pontier D."/>
            <person name="Cavel E."/>
            <person name="Vega D."/>
            <person name="El-Shami M."/>
            <person name="Kanno T."/>
            <person name="Lagrange T."/>
        </authorList>
    </citation>
    <scope>TISSUE SPECIFICITY</scope>
</reference>
<reference key="5">
    <citation type="journal article" date="2011" name="PLoS Genet.">
        <title>SHH1, a homeodomain protein required for DNA methylation, as well as RDR2, RDM4, and chromatin remodeling factors, associate with RNA polymerase IV.</title>
        <authorList>
            <person name="Law J.A."/>
            <person name="Vashisht A.A."/>
            <person name="Wohlschlegel J.A."/>
            <person name="Jacobsen S.E."/>
        </authorList>
    </citation>
    <scope>IDENTIFICATION BY MASS SPECTROMETRY</scope>
    <scope>INTERACTION WITH NRPD1</scope>
    <scope>SUBUNIT</scope>
    <scope>NOMENCLATURE</scope>
</reference>
<feature type="chain" id="PRO_0000423328" description="DNA-directed RNA polymerases IV and V subunit 5B">
    <location>
        <begin position="1"/>
        <end position="218"/>
    </location>
</feature>
<evidence type="ECO:0000250" key="1"/>
<evidence type="ECO:0000269" key="2">
    <source>
    </source>
</evidence>
<evidence type="ECO:0000269" key="3">
    <source>
    </source>
</evidence>
<evidence type="ECO:0000305" key="4"/>